<feature type="chain" id="PRO_1000119450" description="Homoserine O-succinyltransferase">
    <location>
        <begin position="1"/>
        <end position="309"/>
    </location>
</feature>
<feature type="active site" description="Acyl-thioester intermediate" evidence="1">
    <location>
        <position position="142"/>
    </location>
</feature>
<feature type="active site" description="Proton acceptor" evidence="1">
    <location>
        <position position="235"/>
    </location>
</feature>
<feature type="active site" evidence="1">
    <location>
        <position position="237"/>
    </location>
</feature>
<feature type="binding site" evidence="1">
    <location>
        <position position="163"/>
    </location>
    <ligand>
        <name>substrate</name>
    </ligand>
</feature>
<feature type="binding site" evidence="1">
    <location>
        <position position="192"/>
    </location>
    <ligand>
        <name>substrate</name>
    </ligand>
</feature>
<feature type="binding site" evidence="1">
    <location>
        <position position="249"/>
    </location>
    <ligand>
        <name>substrate</name>
    </ligand>
</feature>
<feature type="site" description="Important for acyl-CoA specificity" evidence="1">
    <location>
        <position position="111"/>
    </location>
</feature>
<feature type="site" description="Important for substrate specificity" evidence="1">
    <location>
        <position position="192"/>
    </location>
</feature>
<reference key="1">
    <citation type="journal article" date="2009" name="PLoS Genet.">
        <title>Organised genome dynamics in the Escherichia coli species results in highly diverse adaptive paths.</title>
        <authorList>
            <person name="Touchon M."/>
            <person name="Hoede C."/>
            <person name="Tenaillon O."/>
            <person name="Barbe V."/>
            <person name="Baeriswyl S."/>
            <person name="Bidet P."/>
            <person name="Bingen E."/>
            <person name="Bonacorsi S."/>
            <person name="Bouchier C."/>
            <person name="Bouvet O."/>
            <person name="Calteau A."/>
            <person name="Chiapello H."/>
            <person name="Clermont O."/>
            <person name="Cruveiller S."/>
            <person name="Danchin A."/>
            <person name="Diard M."/>
            <person name="Dossat C."/>
            <person name="Karoui M.E."/>
            <person name="Frapy E."/>
            <person name="Garry L."/>
            <person name="Ghigo J.M."/>
            <person name="Gilles A.M."/>
            <person name="Johnson J."/>
            <person name="Le Bouguenec C."/>
            <person name="Lescat M."/>
            <person name="Mangenot S."/>
            <person name="Martinez-Jehanne V."/>
            <person name="Matic I."/>
            <person name="Nassif X."/>
            <person name="Oztas S."/>
            <person name="Petit M.A."/>
            <person name="Pichon C."/>
            <person name="Rouy Z."/>
            <person name="Ruf C.S."/>
            <person name="Schneider D."/>
            <person name="Tourret J."/>
            <person name="Vacherie B."/>
            <person name="Vallenet D."/>
            <person name="Medigue C."/>
            <person name="Rocha E.P.C."/>
            <person name="Denamur E."/>
        </authorList>
    </citation>
    <scope>NUCLEOTIDE SEQUENCE [LARGE SCALE GENOMIC DNA]</scope>
    <source>
        <strain>IAI1</strain>
    </source>
</reference>
<gene>
    <name evidence="1" type="primary">metAS</name>
    <name type="ordered locus">ECIAI1_4233</name>
</gene>
<evidence type="ECO:0000255" key="1">
    <source>
        <dbReference type="HAMAP-Rule" id="MF_00295"/>
    </source>
</evidence>
<sequence>MPIRVPDELPAVNFLREENVFVMTTSRASGQEIRPLKVLILNLMPKKIETENQFLRLLSNSPLQVDIQLLRIDSRESRNTPAEHLNNFYCNFEDIQEQNFDGLIVTGAPLGLVEFNDVAYWPQIKQVLEWSKDHVTSTLFVCWAVQAALNILYGIPKQTRTDKLSGVYEHHILHPHALLTRGFDDSFLAPHSRYADFPAALIRDYTDLEILAETEEGDAYLFASKDKRIAFVTGHPEYDAQTLAQEYFRDVEAGLGPEVPYNYFPHNDPQNTPRASWRSHGNLLFTNWLNYYVYQITPYDLRHMNPTLD</sequence>
<accession>B7M7R7</accession>
<dbReference type="EC" id="2.3.1.46" evidence="1"/>
<dbReference type="EMBL" id="CU928160">
    <property type="protein sequence ID" value="CAR00983.1"/>
    <property type="molecule type" value="Genomic_DNA"/>
</dbReference>
<dbReference type="SMR" id="B7M7R7"/>
<dbReference type="KEGG" id="ecr:ECIAI1_4233"/>
<dbReference type="HOGENOM" id="CLU_057851_0_1_6"/>
<dbReference type="UniPathway" id="UPA00051">
    <property type="reaction ID" value="UER00075"/>
</dbReference>
<dbReference type="GO" id="GO:0005737">
    <property type="term" value="C:cytoplasm"/>
    <property type="evidence" value="ECO:0007669"/>
    <property type="project" value="UniProtKB-SubCell"/>
</dbReference>
<dbReference type="GO" id="GO:0004414">
    <property type="term" value="F:homoserine O-acetyltransferase activity"/>
    <property type="evidence" value="ECO:0007669"/>
    <property type="project" value="UniProtKB-UniRule"/>
</dbReference>
<dbReference type="GO" id="GO:0008899">
    <property type="term" value="F:homoserine O-succinyltransferase activity"/>
    <property type="evidence" value="ECO:0007669"/>
    <property type="project" value="UniProtKB-EC"/>
</dbReference>
<dbReference type="GO" id="GO:0019281">
    <property type="term" value="P:L-methionine biosynthetic process from homoserine via O-succinyl-L-homoserine and cystathionine"/>
    <property type="evidence" value="ECO:0007669"/>
    <property type="project" value="InterPro"/>
</dbReference>
<dbReference type="CDD" id="cd03131">
    <property type="entry name" value="GATase1_HTS"/>
    <property type="match status" value="1"/>
</dbReference>
<dbReference type="FunFam" id="3.40.50.880:FF:000004">
    <property type="entry name" value="Homoserine O-succinyltransferase"/>
    <property type="match status" value="1"/>
</dbReference>
<dbReference type="Gene3D" id="3.40.50.880">
    <property type="match status" value="1"/>
</dbReference>
<dbReference type="HAMAP" id="MF_00295">
    <property type="entry name" value="MetA_acyltransf"/>
    <property type="match status" value="1"/>
</dbReference>
<dbReference type="InterPro" id="IPR029062">
    <property type="entry name" value="Class_I_gatase-like"/>
</dbReference>
<dbReference type="InterPro" id="IPR005697">
    <property type="entry name" value="HST_MetA"/>
</dbReference>
<dbReference type="InterPro" id="IPR033752">
    <property type="entry name" value="MetA_family"/>
</dbReference>
<dbReference type="NCBIfam" id="TIGR01001">
    <property type="entry name" value="metA"/>
    <property type="match status" value="1"/>
</dbReference>
<dbReference type="PANTHER" id="PTHR20919">
    <property type="entry name" value="HOMOSERINE O-SUCCINYLTRANSFERASE"/>
    <property type="match status" value="1"/>
</dbReference>
<dbReference type="PANTHER" id="PTHR20919:SF0">
    <property type="entry name" value="HOMOSERINE O-SUCCINYLTRANSFERASE"/>
    <property type="match status" value="1"/>
</dbReference>
<dbReference type="Pfam" id="PF04204">
    <property type="entry name" value="HTS"/>
    <property type="match status" value="1"/>
</dbReference>
<dbReference type="PIRSF" id="PIRSF000450">
    <property type="entry name" value="H_ser_succinyltr"/>
    <property type="match status" value="1"/>
</dbReference>
<dbReference type="SUPFAM" id="SSF52317">
    <property type="entry name" value="Class I glutamine amidotransferase-like"/>
    <property type="match status" value="1"/>
</dbReference>
<protein>
    <recommendedName>
        <fullName evidence="1">Homoserine O-succinyltransferase</fullName>
        <shortName evidence="1">HST</shortName>
        <ecNumber evidence="1">2.3.1.46</ecNumber>
    </recommendedName>
    <alternativeName>
        <fullName evidence="1">Homoserine transsuccinylase</fullName>
        <shortName evidence="1">HTS</shortName>
    </alternativeName>
</protein>
<keyword id="KW-0012">Acyltransferase</keyword>
<keyword id="KW-0028">Amino-acid biosynthesis</keyword>
<keyword id="KW-0963">Cytoplasm</keyword>
<keyword id="KW-0486">Methionine biosynthesis</keyword>
<keyword id="KW-0808">Transferase</keyword>
<name>METAS_ECO8A</name>
<comment type="function">
    <text evidence="1">Transfers a succinyl group from succinyl-CoA to L-homoserine, forming succinyl-L-homoserine.</text>
</comment>
<comment type="catalytic activity">
    <reaction evidence="1">
        <text>L-homoserine + succinyl-CoA = O-succinyl-L-homoserine + CoA</text>
        <dbReference type="Rhea" id="RHEA:22008"/>
        <dbReference type="ChEBI" id="CHEBI:57287"/>
        <dbReference type="ChEBI" id="CHEBI:57292"/>
        <dbReference type="ChEBI" id="CHEBI:57476"/>
        <dbReference type="ChEBI" id="CHEBI:57661"/>
        <dbReference type="EC" id="2.3.1.46"/>
    </reaction>
</comment>
<comment type="pathway">
    <text evidence="1">Amino-acid biosynthesis; L-methionine biosynthesis via de novo pathway; O-succinyl-L-homoserine from L-homoserine: step 1/1.</text>
</comment>
<comment type="subunit">
    <text evidence="1">Homodimer.</text>
</comment>
<comment type="subcellular location">
    <subcellularLocation>
        <location evidence="1">Cytoplasm</location>
    </subcellularLocation>
</comment>
<comment type="similarity">
    <text evidence="1">Belongs to the MetA family.</text>
</comment>
<organism>
    <name type="scientific">Escherichia coli O8 (strain IAI1)</name>
    <dbReference type="NCBI Taxonomy" id="585034"/>
    <lineage>
        <taxon>Bacteria</taxon>
        <taxon>Pseudomonadati</taxon>
        <taxon>Pseudomonadota</taxon>
        <taxon>Gammaproteobacteria</taxon>
        <taxon>Enterobacterales</taxon>
        <taxon>Enterobacteriaceae</taxon>
        <taxon>Escherichia</taxon>
    </lineage>
</organism>
<proteinExistence type="inferred from homology"/>